<proteinExistence type="evidence at protein level"/>
<evidence type="ECO:0000250" key="1">
    <source>
        <dbReference type="UniProtKB" id="P95649"/>
    </source>
</evidence>
<evidence type="ECO:0000250" key="2">
    <source>
        <dbReference type="UniProtKB" id="Q94K71"/>
    </source>
</evidence>
<evidence type="ECO:0000269" key="3">
    <source>
    </source>
</evidence>
<evidence type="ECO:0000269" key="4">
    <source>
    </source>
</evidence>
<evidence type="ECO:0000303" key="5">
    <source>
    </source>
</evidence>
<evidence type="ECO:0000305" key="6"/>
<dbReference type="EC" id="3.1.3.68" evidence="4"/>
<dbReference type="EMBL" id="U00062">
    <property type="protein sequence ID" value="AAB68916.1"/>
    <property type="molecule type" value="Genomic_DNA"/>
</dbReference>
<dbReference type="EMBL" id="BK006934">
    <property type="protein sequence ID" value="DAA06735.1"/>
    <property type="molecule type" value="Genomic_DNA"/>
</dbReference>
<dbReference type="PIR" id="S46747">
    <property type="entry name" value="S46747"/>
</dbReference>
<dbReference type="RefSeq" id="NP_011909.1">
    <property type="nucleotide sequence ID" value="NM_001179173.1"/>
</dbReference>
<dbReference type="SMR" id="P38773"/>
<dbReference type="BioGRID" id="36475">
    <property type="interactions" value="41"/>
</dbReference>
<dbReference type="DIP" id="DIP-5586N"/>
<dbReference type="FunCoup" id="P38773">
    <property type="interactions" value="215"/>
</dbReference>
<dbReference type="IntAct" id="P38773">
    <property type="interactions" value="5"/>
</dbReference>
<dbReference type="STRING" id="4932.YHR043C"/>
<dbReference type="PaxDb" id="4932-YHR043C"/>
<dbReference type="PeptideAtlas" id="P38773"/>
<dbReference type="TopDownProteomics" id="P38773"/>
<dbReference type="DNASU" id="856439"/>
<dbReference type="EnsemblFungi" id="YHR043C_mRNA">
    <property type="protein sequence ID" value="YHR043C"/>
    <property type="gene ID" value="YHR043C"/>
</dbReference>
<dbReference type="GeneID" id="856439"/>
<dbReference type="KEGG" id="sce:YHR043C"/>
<dbReference type="AGR" id="SGD:S000001085"/>
<dbReference type="SGD" id="S000001085">
    <property type="gene designation" value="DOG2"/>
</dbReference>
<dbReference type="VEuPathDB" id="FungiDB:YHR043C"/>
<dbReference type="eggNOG" id="KOG2914">
    <property type="taxonomic scope" value="Eukaryota"/>
</dbReference>
<dbReference type="GeneTree" id="ENSGT00940000176801"/>
<dbReference type="HOGENOM" id="CLU_045011_13_4_1"/>
<dbReference type="InParanoid" id="P38773"/>
<dbReference type="OMA" id="DMADNYL"/>
<dbReference type="OrthoDB" id="40579at2759"/>
<dbReference type="BioCyc" id="YEAST:YHR043C-MONOMER"/>
<dbReference type="BioGRID-ORCS" id="856439">
    <property type="hits" value="1 hit in 10 CRISPR screens"/>
</dbReference>
<dbReference type="PRO" id="PR:P38773"/>
<dbReference type="Proteomes" id="UP000002311">
    <property type="component" value="Chromosome VIII"/>
</dbReference>
<dbReference type="RNAct" id="P38773">
    <property type="molecule type" value="protein"/>
</dbReference>
<dbReference type="GO" id="GO:0005737">
    <property type="term" value="C:cytoplasm"/>
    <property type="evidence" value="ECO:0007005"/>
    <property type="project" value="SGD"/>
</dbReference>
<dbReference type="GO" id="GO:0005634">
    <property type="term" value="C:nucleus"/>
    <property type="evidence" value="ECO:0007005"/>
    <property type="project" value="SGD"/>
</dbReference>
<dbReference type="GO" id="GO:0003850">
    <property type="term" value="F:2-deoxyglucose-6-phosphatase activity"/>
    <property type="evidence" value="ECO:0000314"/>
    <property type="project" value="SGD"/>
</dbReference>
<dbReference type="GO" id="GO:0046872">
    <property type="term" value="F:metal ion binding"/>
    <property type="evidence" value="ECO:0007669"/>
    <property type="project" value="UniProtKB-KW"/>
</dbReference>
<dbReference type="GO" id="GO:0005975">
    <property type="term" value="P:carbohydrate metabolic process"/>
    <property type="evidence" value="ECO:0000318"/>
    <property type="project" value="GO_Central"/>
</dbReference>
<dbReference type="GO" id="GO:0006006">
    <property type="term" value="P:glucose metabolic process"/>
    <property type="evidence" value="ECO:0000314"/>
    <property type="project" value="SGD"/>
</dbReference>
<dbReference type="CDD" id="cd07527">
    <property type="entry name" value="HAD_ScGPP-like"/>
    <property type="match status" value="1"/>
</dbReference>
<dbReference type="Gene3D" id="3.40.50.1000">
    <property type="entry name" value="HAD superfamily/HAD-like"/>
    <property type="match status" value="1"/>
</dbReference>
<dbReference type="Gene3D" id="1.10.150.240">
    <property type="entry name" value="Putative phosphatase, domain 2"/>
    <property type="match status" value="1"/>
</dbReference>
<dbReference type="InterPro" id="IPR036412">
    <property type="entry name" value="HAD-like_sf"/>
</dbReference>
<dbReference type="InterPro" id="IPR051806">
    <property type="entry name" value="HAD-like_SPP"/>
</dbReference>
<dbReference type="InterPro" id="IPR006439">
    <property type="entry name" value="HAD-SF_hydro_IA"/>
</dbReference>
<dbReference type="InterPro" id="IPR023214">
    <property type="entry name" value="HAD_sf"/>
</dbReference>
<dbReference type="InterPro" id="IPR023198">
    <property type="entry name" value="PGP-like_dom2"/>
</dbReference>
<dbReference type="NCBIfam" id="TIGR01509">
    <property type="entry name" value="HAD-SF-IA-v3"/>
    <property type="match status" value="1"/>
</dbReference>
<dbReference type="PANTHER" id="PTHR43481:SF9">
    <property type="entry name" value="2-DEOXYGLUCOSE-6-PHOSPHATE PHOSPHATASE 1-RELATED"/>
    <property type="match status" value="1"/>
</dbReference>
<dbReference type="PANTHER" id="PTHR43481">
    <property type="entry name" value="FRUCTOSE-1-PHOSPHATE PHOSPHATASE"/>
    <property type="match status" value="1"/>
</dbReference>
<dbReference type="Pfam" id="PF00702">
    <property type="entry name" value="Hydrolase"/>
    <property type="match status" value="1"/>
</dbReference>
<dbReference type="SFLD" id="SFLDF00031">
    <property type="entry name" value="2-deoxyglucose-6-phosphatase"/>
    <property type="match status" value="1"/>
</dbReference>
<dbReference type="SFLD" id="SFLDG01129">
    <property type="entry name" value="C1.5:_HAD__Beta-PGM__Phosphata"/>
    <property type="match status" value="1"/>
</dbReference>
<dbReference type="SUPFAM" id="SSF56784">
    <property type="entry name" value="HAD-like"/>
    <property type="match status" value="1"/>
</dbReference>
<feature type="chain" id="PRO_0000079975" description="2-deoxyglucose-6-phosphate phosphatase 2">
    <location>
        <begin position="1"/>
        <end position="246"/>
    </location>
</feature>
<feature type="active site" description="Nucleophile" evidence="2">
    <location>
        <position position="83"/>
    </location>
</feature>
<feature type="binding site" evidence="2">
    <location>
        <position position="83"/>
    </location>
    <ligand>
        <name>Mg(2+)</name>
        <dbReference type="ChEBI" id="CHEBI:18420"/>
    </ligand>
</feature>
<feature type="binding site" evidence="1">
    <location>
        <position position="83"/>
    </location>
    <ligand>
        <name>substrate</name>
    </ligand>
</feature>
<feature type="binding site" evidence="1">
    <location>
        <position position="92"/>
    </location>
    <ligand>
        <name>substrate</name>
    </ligand>
</feature>
<feature type="binding site" evidence="1">
    <location>
        <begin position="146"/>
        <end position="149"/>
    </location>
    <ligand>
        <name>substrate</name>
    </ligand>
</feature>
<feature type="binding site" evidence="2">
    <location>
        <position position="183"/>
    </location>
    <ligand>
        <name>Mg(2+)</name>
        <dbReference type="ChEBI" id="CHEBI:18420"/>
    </ligand>
</feature>
<gene>
    <name evidence="5" type="primary">DOG2</name>
    <name type="ordered locus">YHR043C</name>
</gene>
<sequence>MPQFSVDLCLFDLDGTIVSTTTAAESAWKKLCRQHGVDPVELFKHSHGARSQEMMKKFFPKLDNTDNKGVLALEKDMADNYLDTVSLIPGAENLLLSLDVDTETQKKLPERKWAIVTSGSPYLAFSWFETILKNVGKPKVFITGFDVKNGKPDPEGYSRARDLLRQDLQLTGKQDLKYVVFEDAPVGIKAGKAMGAITVGITSSYDKSVLFDAGADYVVCDLTQVSVVKNNENGIVIQVNNPLTRD</sequence>
<comment type="function">
    <text evidence="4">Phosphatase that is active on 2-deoxy-D-glucose 6-phosphate (2-DOG-6P), but not very active on fructose-1-P.</text>
</comment>
<comment type="catalytic activity">
    <reaction evidence="4">
        <text>2-deoxy-D-glucose 6-phosphate + H2O = 2-deoxy-D-glucose + phosphate</text>
        <dbReference type="Rhea" id="RHEA:22236"/>
        <dbReference type="ChEBI" id="CHEBI:15377"/>
        <dbReference type="ChEBI" id="CHEBI:43474"/>
        <dbReference type="ChEBI" id="CHEBI:84755"/>
        <dbReference type="ChEBI" id="CHEBI:84760"/>
        <dbReference type="EC" id="3.1.3.68"/>
    </reaction>
</comment>
<comment type="cofactor">
    <cofactor evidence="2">
        <name>Mg(2+)</name>
        <dbReference type="ChEBI" id="CHEBI:18420"/>
    </cofactor>
</comment>
<comment type="biophysicochemical properties">
    <kinetics>
        <KM evidence="4">41 mM for 2-deoxy-D-glucose 6-phosphate</KM>
    </kinetics>
    <phDependence>
        <text evidence="4">Optimum pH is 6.</text>
    </phDependence>
    <temperatureDependence>
        <text evidence="4">Optimum temperature is 40 degrees Celsius.</text>
    </temperatureDependence>
</comment>
<comment type="miscellaneous">
    <text evidence="3">Present with 2400 molecules/cell in log phase SD medium.</text>
</comment>
<comment type="similarity">
    <text evidence="6">Belongs to the HAD-like hydrolase superfamily. DOG/GPP family.</text>
</comment>
<reference key="1">
    <citation type="journal article" date="1995" name="Yeast">
        <title>DOGR1 and DOGR2: two genes from Saccharomyces cerevisiae that confer 2-deoxyglucose resistance when overexpressed.</title>
        <authorList>
            <person name="Randez-Gil F."/>
            <person name="Blasco A."/>
            <person name="Prieto J.A."/>
            <person name="Sanz P."/>
        </authorList>
    </citation>
    <scope>NUCLEOTIDE SEQUENCE [GENOMIC DNA]</scope>
    <scope>FUNCTION</scope>
    <scope>CATALYTIC ACTIVITY</scope>
    <scope>BIOPHYSICOCHEMICAL PROPERTIES</scope>
</reference>
<reference key="2">
    <citation type="journal article" date="1994" name="Science">
        <title>Complete nucleotide sequence of Saccharomyces cerevisiae chromosome VIII.</title>
        <authorList>
            <person name="Johnston M."/>
            <person name="Andrews S."/>
            <person name="Brinkman R."/>
            <person name="Cooper J."/>
            <person name="Ding H."/>
            <person name="Dover J."/>
            <person name="Du Z."/>
            <person name="Favello A."/>
            <person name="Fulton L."/>
            <person name="Gattung S."/>
            <person name="Geisel C."/>
            <person name="Kirsten J."/>
            <person name="Kucaba T."/>
            <person name="Hillier L.W."/>
            <person name="Jier M."/>
            <person name="Johnston L."/>
            <person name="Langston Y."/>
            <person name="Latreille P."/>
            <person name="Louis E.J."/>
            <person name="Macri C."/>
            <person name="Mardis E."/>
            <person name="Menezes S."/>
            <person name="Mouser L."/>
            <person name="Nhan M."/>
            <person name="Rifkin L."/>
            <person name="Riles L."/>
            <person name="St Peter H."/>
            <person name="Trevaskis E."/>
            <person name="Vaughan K."/>
            <person name="Vignati D."/>
            <person name="Wilcox L."/>
            <person name="Wohldman P."/>
            <person name="Waterston R."/>
            <person name="Wilson R."/>
            <person name="Vaudin M."/>
        </authorList>
    </citation>
    <scope>NUCLEOTIDE SEQUENCE [LARGE SCALE GENOMIC DNA]</scope>
    <source>
        <strain>ATCC 204508 / S288c</strain>
    </source>
</reference>
<reference key="3">
    <citation type="journal article" date="2014" name="G3 (Bethesda)">
        <title>The reference genome sequence of Saccharomyces cerevisiae: Then and now.</title>
        <authorList>
            <person name="Engel S.R."/>
            <person name="Dietrich F.S."/>
            <person name="Fisk D.G."/>
            <person name="Binkley G."/>
            <person name="Balakrishnan R."/>
            <person name="Costanzo M.C."/>
            <person name="Dwight S.S."/>
            <person name="Hitz B.C."/>
            <person name="Karra K."/>
            <person name="Nash R.S."/>
            <person name="Weng S."/>
            <person name="Wong E.D."/>
            <person name="Lloyd P."/>
            <person name="Skrzypek M.S."/>
            <person name="Miyasato S.R."/>
            <person name="Simison M."/>
            <person name="Cherry J.M."/>
        </authorList>
    </citation>
    <scope>GENOME REANNOTATION</scope>
    <source>
        <strain>ATCC 204508 / S288c</strain>
    </source>
</reference>
<reference key="4">
    <citation type="journal article" date="2003" name="Nature">
        <title>Global analysis of protein expression in yeast.</title>
        <authorList>
            <person name="Ghaemmaghami S."/>
            <person name="Huh W.-K."/>
            <person name="Bower K."/>
            <person name="Howson R.W."/>
            <person name="Belle A."/>
            <person name="Dephoure N."/>
            <person name="O'Shea E.K."/>
            <person name="Weissman J.S."/>
        </authorList>
    </citation>
    <scope>LEVEL OF PROTEIN EXPRESSION [LARGE SCALE ANALYSIS]</scope>
</reference>
<name>DOG2_YEAST</name>
<accession>P38773</accession>
<accession>D3DKZ1</accession>
<protein>
    <recommendedName>
        <fullName evidence="5">2-deoxyglucose-6-phosphate phosphatase 2</fullName>
        <shortName evidence="5">2-DOG-6-P 2</shortName>
        <shortName evidence="5">2-deoxyglucose-6-phosphatase 2</shortName>
        <ecNumber evidence="4">3.1.3.68</ecNumber>
    </recommendedName>
</protein>
<organism>
    <name type="scientific">Saccharomyces cerevisiae (strain ATCC 204508 / S288c)</name>
    <name type="common">Baker's yeast</name>
    <dbReference type="NCBI Taxonomy" id="559292"/>
    <lineage>
        <taxon>Eukaryota</taxon>
        <taxon>Fungi</taxon>
        <taxon>Dikarya</taxon>
        <taxon>Ascomycota</taxon>
        <taxon>Saccharomycotina</taxon>
        <taxon>Saccharomycetes</taxon>
        <taxon>Saccharomycetales</taxon>
        <taxon>Saccharomycetaceae</taxon>
        <taxon>Saccharomyces</taxon>
    </lineage>
</organism>
<keyword id="KW-0378">Hydrolase</keyword>
<keyword id="KW-0460">Magnesium</keyword>
<keyword id="KW-0479">Metal-binding</keyword>
<keyword id="KW-1185">Reference proteome</keyword>